<accession>Q04Q05</accession>
<organism>
    <name type="scientific">Leptospira borgpetersenii serovar Hardjo-bovis (strain JB197)</name>
    <dbReference type="NCBI Taxonomy" id="355277"/>
    <lineage>
        <taxon>Bacteria</taxon>
        <taxon>Pseudomonadati</taxon>
        <taxon>Spirochaetota</taxon>
        <taxon>Spirochaetia</taxon>
        <taxon>Leptospirales</taxon>
        <taxon>Leptospiraceae</taxon>
        <taxon>Leptospira</taxon>
    </lineage>
</organism>
<keyword id="KW-0687">Ribonucleoprotein</keyword>
<keyword id="KW-0689">Ribosomal protein</keyword>
<keyword id="KW-0694">RNA-binding</keyword>
<keyword id="KW-0699">rRNA-binding</keyword>
<reference key="1">
    <citation type="journal article" date="2006" name="Proc. Natl. Acad. Sci. U.S.A.">
        <title>Genome reduction in Leptospira borgpetersenii reflects limited transmission potential.</title>
        <authorList>
            <person name="Bulach D.M."/>
            <person name="Zuerner R.L."/>
            <person name="Wilson P."/>
            <person name="Seemann T."/>
            <person name="McGrath A."/>
            <person name="Cullen P.A."/>
            <person name="Davis J."/>
            <person name="Johnson M."/>
            <person name="Kuczek E."/>
            <person name="Alt D.P."/>
            <person name="Peterson-Burch B."/>
            <person name="Coppel R.L."/>
            <person name="Rood J.I."/>
            <person name="Davies J.K."/>
            <person name="Adler B."/>
        </authorList>
    </citation>
    <scope>NUCLEOTIDE SEQUENCE [LARGE SCALE GENOMIC DNA]</scope>
    <source>
        <strain>JB197</strain>
    </source>
</reference>
<evidence type="ECO:0000255" key="1">
    <source>
        <dbReference type="HAMAP-Rule" id="MF_01334"/>
    </source>
</evidence>
<evidence type="ECO:0000256" key="2">
    <source>
        <dbReference type="SAM" id="MobiDB-lite"/>
    </source>
</evidence>
<evidence type="ECO:0000305" key="3"/>
<comment type="function">
    <text evidence="1">This is one of the proteins that binds to the 5S RNA in the ribosome where it forms part of the central protuberance.</text>
</comment>
<comment type="subunit">
    <text evidence="1">Part of the 50S ribosomal subunit; part of the 5S rRNA/L5/L18/L25 subcomplex. Contacts the 5S rRNA. Binds to the 5S rRNA independently of L5 and L18.</text>
</comment>
<comment type="similarity">
    <text evidence="1">Belongs to the bacterial ribosomal protein bL25 family. CTC subfamily.</text>
</comment>
<proteinExistence type="inferred from homology"/>
<feature type="chain" id="PRO_1000052899" description="Large ribosomal subunit protein bL25">
    <location>
        <begin position="1"/>
        <end position="212"/>
    </location>
</feature>
<feature type="region of interest" description="Disordered" evidence="2">
    <location>
        <begin position="1"/>
        <end position="25"/>
    </location>
</feature>
<feature type="compositionally biased region" description="Basic and acidic residues" evidence="2">
    <location>
        <begin position="13"/>
        <end position="24"/>
    </location>
</feature>
<dbReference type="EMBL" id="CP000350">
    <property type="protein sequence ID" value="ABJ77015.1"/>
    <property type="molecule type" value="Genomic_DNA"/>
</dbReference>
<dbReference type="RefSeq" id="WP_002756938.1">
    <property type="nucleotide sequence ID" value="NC_008510.1"/>
</dbReference>
<dbReference type="SMR" id="Q04Q05"/>
<dbReference type="KEGG" id="lbj:LBJ_2588"/>
<dbReference type="HOGENOM" id="CLU_075939_2_1_12"/>
<dbReference type="Proteomes" id="UP000000656">
    <property type="component" value="Chromosome 1"/>
</dbReference>
<dbReference type="GO" id="GO:0022625">
    <property type="term" value="C:cytosolic large ribosomal subunit"/>
    <property type="evidence" value="ECO:0007669"/>
    <property type="project" value="TreeGrafter"/>
</dbReference>
<dbReference type="GO" id="GO:0008097">
    <property type="term" value="F:5S rRNA binding"/>
    <property type="evidence" value="ECO:0007669"/>
    <property type="project" value="InterPro"/>
</dbReference>
<dbReference type="GO" id="GO:0003735">
    <property type="term" value="F:structural constituent of ribosome"/>
    <property type="evidence" value="ECO:0007669"/>
    <property type="project" value="InterPro"/>
</dbReference>
<dbReference type="GO" id="GO:0006412">
    <property type="term" value="P:translation"/>
    <property type="evidence" value="ECO:0007669"/>
    <property type="project" value="UniProtKB-UniRule"/>
</dbReference>
<dbReference type="CDD" id="cd00495">
    <property type="entry name" value="Ribosomal_L25_TL5_CTC"/>
    <property type="match status" value="1"/>
</dbReference>
<dbReference type="Gene3D" id="2.170.120.20">
    <property type="entry name" value="Ribosomal protein L25, beta domain"/>
    <property type="match status" value="1"/>
</dbReference>
<dbReference type="Gene3D" id="2.40.240.10">
    <property type="entry name" value="Ribosomal Protein L25, Chain P"/>
    <property type="match status" value="1"/>
</dbReference>
<dbReference type="HAMAP" id="MF_01334">
    <property type="entry name" value="Ribosomal_bL25_CTC"/>
    <property type="match status" value="1"/>
</dbReference>
<dbReference type="InterPro" id="IPR020056">
    <property type="entry name" value="Rbsml_bL25/Gln-tRNA_synth_N"/>
</dbReference>
<dbReference type="InterPro" id="IPR011035">
    <property type="entry name" value="Ribosomal_bL25/Gln-tRNA_synth"/>
</dbReference>
<dbReference type="InterPro" id="IPR020057">
    <property type="entry name" value="Ribosomal_bL25_b-dom"/>
</dbReference>
<dbReference type="InterPro" id="IPR037121">
    <property type="entry name" value="Ribosomal_bL25_C"/>
</dbReference>
<dbReference type="InterPro" id="IPR001021">
    <property type="entry name" value="Ribosomal_bL25_long"/>
</dbReference>
<dbReference type="InterPro" id="IPR029751">
    <property type="entry name" value="Ribosomal_L25_dom"/>
</dbReference>
<dbReference type="InterPro" id="IPR020930">
    <property type="entry name" value="Ribosomal_uL5_bac-type"/>
</dbReference>
<dbReference type="NCBIfam" id="TIGR00731">
    <property type="entry name" value="bL25_bact_ctc"/>
    <property type="match status" value="1"/>
</dbReference>
<dbReference type="NCBIfam" id="NF004136">
    <property type="entry name" value="PRK05618.3-2"/>
    <property type="match status" value="1"/>
</dbReference>
<dbReference type="PANTHER" id="PTHR33284">
    <property type="entry name" value="RIBOSOMAL PROTEIN L25/GLN-TRNA SYNTHETASE, ANTI-CODON-BINDING DOMAIN-CONTAINING PROTEIN"/>
    <property type="match status" value="1"/>
</dbReference>
<dbReference type="PANTHER" id="PTHR33284:SF1">
    <property type="entry name" value="RIBOSOMAL PROTEIN L25_GLN-TRNA SYNTHETASE, ANTI-CODON-BINDING DOMAIN-CONTAINING PROTEIN"/>
    <property type="match status" value="1"/>
</dbReference>
<dbReference type="Pfam" id="PF01386">
    <property type="entry name" value="Ribosomal_L25p"/>
    <property type="match status" value="1"/>
</dbReference>
<dbReference type="Pfam" id="PF14693">
    <property type="entry name" value="Ribosomal_TL5_C"/>
    <property type="match status" value="1"/>
</dbReference>
<dbReference type="SUPFAM" id="SSF50715">
    <property type="entry name" value="Ribosomal protein L25-like"/>
    <property type="match status" value="1"/>
</dbReference>
<protein>
    <recommendedName>
        <fullName evidence="1">Large ribosomal subunit protein bL25</fullName>
    </recommendedName>
    <alternativeName>
        <fullName evidence="3">50S ribosomal protein L25</fullName>
    </alternativeName>
    <alternativeName>
        <fullName evidence="1">General stress protein CTC</fullName>
    </alternativeName>
</protein>
<gene>
    <name evidence="1" type="primary">rplY</name>
    <name evidence="1" type="synonym">ctc</name>
    <name type="ordered locus">LBJ_2588</name>
</gene>
<name>RL25_LEPBJ</name>
<sequence>MSQSTIHKIAVKKRTETGKNENNRLRSSGMIPVNIIGAGVATSGAVNEKELAKMVHSGIRQSTLIELDVEGQGQQKVFVKEIQRFPEIDRIRHVDFYKVVPGQKIVTKIGIETTGVAKGSKTGGQFEHIIHEIRVKTIPEDLLENLTIDVTDLDVGDSIKISQLKVPASWEILINGDPIVTSVNKTKALLAAERAEAKGAAPDDAKAKKGKK</sequence>